<comment type="function">
    <text evidence="2">Cell wall formation.</text>
</comment>
<comment type="catalytic activity">
    <reaction evidence="2">
        <text>2 D-alanine + ATP = D-alanyl-D-alanine + ADP + phosphate + H(+)</text>
        <dbReference type="Rhea" id="RHEA:11224"/>
        <dbReference type="ChEBI" id="CHEBI:15378"/>
        <dbReference type="ChEBI" id="CHEBI:30616"/>
        <dbReference type="ChEBI" id="CHEBI:43474"/>
        <dbReference type="ChEBI" id="CHEBI:57416"/>
        <dbReference type="ChEBI" id="CHEBI:57822"/>
        <dbReference type="ChEBI" id="CHEBI:456216"/>
        <dbReference type="EC" id="6.3.2.4"/>
    </reaction>
</comment>
<comment type="cofactor">
    <cofactor evidence="1">
        <name>Mg(2+)</name>
        <dbReference type="ChEBI" id="CHEBI:18420"/>
    </cofactor>
    <cofactor evidence="1">
        <name>Mn(2+)</name>
        <dbReference type="ChEBI" id="CHEBI:29035"/>
    </cofactor>
    <text evidence="1">Binds 2 magnesium or manganese ions per subunit.</text>
</comment>
<comment type="pathway">
    <text evidence="2">Cell wall biogenesis; peptidoglycan biosynthesis.</text>
</comment>
<comment type="subcellular location">
    <subcellularLocation>
        <location evidence="2">Cytoplasm</location>
    </subcellularLocation>
</comment>
<comment type="similarity">
    <text evidence="2">Belongs to the D-alanine--D-alanine ligase family.</text>
</comment>
<name>DDL_DELAS</name>
<reference key="1">
    <citation type="submission" date="2007-11" db="EMBL/GenBank/DDBJ databases">
        <title>Complete sequence of Delftia acidovorans DSM 14801 / SPH-1.</title>
        <authorList>
            <person name="Copeland A."/>
            <person name="Lucas S."/>
            <person name="Lapidus A."/>
            <person name="Barry K."/>
            <person name="Glavina del Rio T."/>
            <person name="Dalin E."/>
            <person name="Tice H."/>
            <person name="Pitluck S."/>
            <person name="Lowry S."/>
            <person name="Clum A."/>
            <person name="Schmutz J."/>
            <person name="Larimer F."/>
            <person name="Land M."/>
            <person name="Hauser L."/>
            <person name="Kyrpides N."/>
            <person name="Kim E."/>
            <person name="Schleheck D."/>
            <person name="Richardson P."/>
        </authorList>
    </citation>
    <scope>NUCLEOTIDE SEQUENCE [LARGE SCALE GENOMIC DNA]</scope>
    <source>
        <strain>DSM 14801 / SPH-1</strain>
    </source>
</reference>
<organism>
    <name type="scientific">Delftia acidovorans (strain DSM 14801 / SPH-1)</name>
    <dbReference type="NCBI Taxonomy" id="398578"/>
    <lineage>
        <taxon>Bacteria</taxon>
        <taxon>Pseudomonadati</taxon>
        <taxon>Pseudomonadota</taxon>
        <taxon>Betaproteobacteria</taxon>
        <taxon>Burkholderiales</taxon>
        <taxon>Comamonadaceae</taxon>
        <taxon>Delftia</taxon>
    </lineage>
</organism>
<feature type="chain" id="PRO_1000091180" description="D-alanine--D-alanine ligase">
    <location>
        <begin position="1"/>
        <end position="326"/>
    </location>
</feature>
<feature type="domain" description="ATP-grasp" evidence="2">
    <location>
        <begin position="112"/>
        <end position="312"/>
    </location>
</feature>
<feature type="binding site" evidence="2">
    <location>
        <begin position="138"/>
        <end position="193"/>
    </location>
    <ligand>
        <name>ATP</name>
        <dbReference type="ChEBI" id="CHEBI:30616"/>
    </ligand>
</feature>
<feature type="binding site" evidence="2">
    <location>
        <position position="265"/>
    </location>
    <ligand>
        <name>Mg(2+)</name>
        <dbReference type="ChEBI" id="CHEBI:18420"/>
        <label>1</label>
    </ligand>
</feature>
<feature type="binding site" evidence="2">
    <location>
        <position position="279"/>
    </location>
    <ligand>
        <name>Mg(2+)</name>
        <dbReference type="ChEBI" id="CHEBI:18420"/>
        <label>1</label>
    </ligand>
</feature>
<feature type="binding site" evidence="2">
    <location>
        <position position="279"/>
    </location>
    <ligand>
        <name>Mg(2+)</name>
        <dbReference type="ChEBI" id="CHEBI:18420"/>
        <label>2</label>
    </ligand>
</feature>
<feature type="binding site" evidence="2">
    <location>
        <position position="281"/>
    </location>
    <ligand>
        <name>Mg(2+)</name>
        <dbReference type="ChEBI" id="CHEBI:18420"/>
        <label>2</label>
    </ligand>
</feature>
<sequence>MSGFGTQIDVKALGKVAVLLGGRSAEREVSLMSGTGVLKALLSHGVDAHAFDPAERDLGELKKEGFDRCFIALHGRYGEDGTVQGALELLGIPYTGPGVMASSIAMDKIMTKRIWRFEGLPTPDWRLVASAGETRAALQALGAPMIVKPSREGSTIGLTKVWTAEECDQAYVLASRYDPEVLCEEFIEGDETTCPVLGTGEGAHALPVIRIVAPEGNYDYQNKYFTDDTKYHCPSGLPAEEEAEIRRIVVRAFRTLGCRGWSRADIMIRASDRKPFLLEINTSPGMTGHSLVPMSARAIGVSYENLCLGILASAALDAAQPEQEHA</sequence>
<protein>
    <recommendedName>
        <fullName evidence="2">D-alanine--D-alanine ligase</fullName>
        <ecNumber evidence="2">6.3.2.4</ecNumber>
    </recommendedName>
    <alternativeName>
        <fullName evidence="2">D-Ala-D-Ala ligase</fullName>
    </alternativeName>
    <alternativeName>
        <fullName evidence="2">D-alanylalanine synthetase</fullName>
    </alternativeName>
</protein>
<gene>
    <name evidence="2" type="primary">ddl</name>
    <name type="ordered locus">Daci_1472</name>
</gene>
<keyword id="KW-0067">ATP-binding</keyword>
<keyword id="KW-0133">Cell shape</keyword>
<keyword id="KW-0961">Cell wall biogenesis/degradation</keyword>
<keyword id="KW-0963">Cytoplasm</keyword>
<keyword id="KW-0436">Ligase</keyword>
<keyword id="KW-0460">Magnesium</keyword>
<keyword id="KW-0464">Manganese</keyword>
<keyword id="KW-0479">Metal-binding</keyword>
<keyword id="KW-0547">Nucleotide-binding</keyword>
<keyword id="KW-0573">Peptidoglycan synthesis</keyword>
<keyword id="KW-1185">Reference proteome</keyword>
<accession>A9BUK8</accession>
<evidence type="ECO:0000250" key="1"/>
<evidence type="ECO:0000255" key="2">
    <source>
        <dbReference type="HAMAP-Rule" id="MF_00047"/>
    </source>
</evidence>
<dbReference type="EC" id="6.3.2.4" evidence="2"/>
<dbReference type="EMBL" id="CP000884">
    <property type="protein sequence ID" value="ABX34116.1"/>
    <property type="molecule type" value="Genomic_DNA"/>
</dbReference>
<dbReference type="RefSeq" id="WP_012203402.1">
    <property type="nucleotide sequence ID" value="NC_010002.1"/>
</dbReference>
<dbReference type="SMR" id="A9BUK8"/>
<dbReference type="STRING" id="398578.Daci_1472"/>
<dbReference type="GeneID" id="24117469"/>
<dbReference type="KEGG" id="dac:Daci_1472"/>
<dbReference type="eggNOG" id="COG1181">
    <property type="taxonomic scope" value="Bacteria"/>
</dbReference>
<dbReference type="HOGENOM" id="CLU_039268_1_2_4"/>
<dbReference type="UniPathway" id="UPA00219"/>
<dbReference type="Proteomes" id="UP000000784">
    <property type="component" value="Chromosome"/>
</dbReference>
<dbReference type="GO" id="GO:0005829">
    <property type="term" value="C:cytosol"/>
    <property type="evidence" value="ECO:0007669"/>
    <property type="project" value="TreeGrafter"/>
</dbReference>
<dbReference type="GO" id="GO:0005524">
    <property type="term" value="F:ATP binding"/>
    <property type="evidence" value="ECO:0007669"/>
    <property type="project" value="UniProtKB-KW"/>
</dbReference>
<dbReference type="GO" id="GO:0008716">
    <property type="term" value="F:D-alanine-D-alanine ligase activity"/>
    <property type="evidence" value="ECO:0007669"/>
    <property type="project" value="UniProtKB-UniRule"/>
</dbReference>
<dbReference type="GO" id="GO:0046872">
    <property type="term" value="F:metal ion binding"/>
    <property type="evidence" value="ECO:0007669"/>
    <property type="project" value="UniProtKB-KW"/>
</dbReference>
<dbReference type="GO" id="GO:0071555">
    <property type="term" value="P:cell wall organization"/>
    <property type="evidence" value="ECO:0007669"/>
    <property type="project" value="UniProtKB-KW"/>
</dbReference>
<dbReference type="GO" id="GO:0009252">
    <property type="term" value="P:peptidoglycan biosynthetic process"/>
    <property type="evidence" value="ECO:0007669"/>
    <property type="project" value="UniProtKB-UniRule"/>
</dbReference>
<dbReference type="GO" id="GO:0008360">
    <property type="term" value="P:regulation of cell shape"/>
    <property type="evidence" value="ECO:0007669"/>
    <property type="project" value="UniProtKB-KW"/>
</dbReference>
<dbReference type="FunFam" id="3.40.50.20:FF:000013">
    <property type="entry name" value="D-alanine--D-alanine ligase"/>
    <property type="match status" value="1"/>
</dbReference>
<dbReference type="Gene3D" id="3.40.50.20">
    <property type="match status" value="1"/>
</dbReference>
<dbReference type="Gene3D" id="3.30.1490.20">
    <property type="entry name" value="ATP-grasp fold, A domain"/>
    <property type="match status" value="1"/>
</dbReference>
<dbReference type="Gene3D" id="3.30.470.20">
    <property type="entry name" value="ATP-grasp fold, B domain"/>
    <property type="match status" value="1"/>
</dbReference>
<dbReference type="HAMAP" id="MF_00047">
    <property type="entry name" value="Dala_Dala_lig"/>
    <property type="match status" value="1"/>
</dbReference>
<dbReference type="InterPro" id="IPR011761">
    <property type="entry name" value="ATP-grasp"/>
</dbReference>
<dbReference type="InterPro" id="IPR013815">
    <property type="entry name" value="ATP_grasp_subdomain_1"/>
</dbReference>
<dbReference type="InterPro" id="IPR000291">
    <property type="entry name" value="D-Ala_lig_Van_CS"/>
</dbReference>
<dbReference type="InterPro" id="IPR005905">
    <property type="entry name" value="D_ala_D_ala"/>
</dbReference>
<dbReference type="InterPro" id="IPR011095">
    <property type="entry name" value="Dala_Dala_lig_C"/>
</dbReference>
<dbReference type="InterPro" id="IPR011127">
    <property type="entry name" value="Dala_Dala_lig_N"/>
</dbReference>
<dbReference type="InterPro" id="IPR016185">
    <property type="entry name" value="PreATP-grasp_dom_sf"/>
</dbReference>
<dbReference type="NCBIfam" id="TIGR01205">
    <property type="entry name" value="D_ala_D_alaTIGR"/>
    <property type="match status" value="1"/>
</dbReference>
<dbReference type="NCBIfam" id="NF002378">
    <property type="entry name" value="PRK01372.1"/>
    <property type="match status" value="1"/>
</dbReference>
<dbReference type="PANTHER" id="PTHR23132">
    <property type="entry name" value="D-ALANINE--D-ALANINE LIGASE"/>
    <property type="match status" value="1"/>
</dbReference>
<dbReference type="PANTHER" id="PTHR23132:SF23">
    <property type="entry name" value="D-ALANINE--D-ALANINE LIGASE B"/>
    <property type="match status" value="1"/>
</dbReference>
<dbReference type="Pfam" id="PF07478">
    <property type="entry name" value="Dala_Dala_lig_C"/>
    <property type="match status" value="1"/>
</dbReference>
<dbReference type="Pfam" id="PF01820">
    <property type="entry name" value="Dala_Dala_lig_N"/>
    <property type="match status" value="1"/>
</dbReference>
<dbReference type="PIRSF" id="PIRSF039102">
    <property type="entry name" value="Ddl/VanB"/>
    <property type="match status" value="1"/>
</dbReference>
<dbReference type="SMART" id="SM01209">
    <property type="entry name" value="GARS_A"/>
    <property type="match status" value="1"/>
</dbReference>
<dbReference type="SUPFAM" id="SSF56059">
    <property type="entry name" value="Glutathione synthetase ATP-binding domain-like"/>
    <property type="match status" value="1"/>
</dbReference>
<dbReference type="SUPFAM" id="SSF52440">
    <property type="entry name" value="PreATP-grasp domain"/>
    <property type="match status" value="1"/>
</dbReference>
<dbReference type="PROSITE" id="PS50975">
    <property type="entry name" value="ATP_GRASP"/>
    <property type="match status" value="1"/>
</dbReference>
<dbReference type="PROSITE" id="PS00843">
    <property type="entry name" value="DALA_DALA_LIGASE_1"/>
    <property type="match status" value="1"/>
</dbReference>
<dbReference type="PROSITE" id="PS00844">
    <property type="entry name" value="DALA_DALA_LIGASE_2"/>
    <property type="match status" value="1"/>
</dbReference>
<proteinExistence type="inferred from homology"/>